<sequence length="326" mass="34500">MTKYAKIIGTGSYLPPRRVTNQDLAAQLAEKGIETSDEWIFSRSGISARHWADPDVASSDLAVKAAEQAIEAAGIDRQSIDLILVATSTPDFVFPSTACIIQNKLGINNQCAAFDLQAVCSGFVYALATADKFIRSGSHRNVLVIGTEVFSRILDFNDRTTCVLFGDGAGAVVLSASDEPGILSTAMHSDGSHVGILCVPGNVHGGAIAGNAFLHMDGQAVFKLAVTVLDKVARETMAAAEIQPEQIDWLIPHQANIRIMQGTARKLGLPAERMIAVVHEHGNTSAASIPLALDAAVRDGRIRPGQTVLMEGVGGGFTWGAALLRM</sequence>
<comment type="function">
    <text evidence="1">Catalyzes the condensation reaction of fatty acid synthesis by the addition to an acyl acceptor of two carbons from malonyl-ACP. Catalyzes the first condensation reaction which initiates fatty acid synthesis and may therefore play a role in governing the total rate of fatty acid production. Possesses both acetoacetyl-ACP synthase and acetyl transacylase activities. Its substrate specificity determines the biosynthesis of branched-chain and/or straight-chain of fatty acids.</text>
</comment>
<comment type="catalytic activity">
    <reaction evidence="1">
        <text>malonyl-[ACP] + acetyl-CoA + H(+) = 3-oxobutanoyl-[ACP] + CO2 + CoA</text>
        <dbReference type="Rhea" id="RHEA:12080"/>
        <dbReference type="Rhea" id="RHEA-COMP:9623"/>
        <dbReference type="Rhea" id="RHEA-COMP:9625"/>
        <dbReference type="ChEBI" id="CHEBI:15378"/>
        <dbReference type="ChEBI" id="CHEBI:16526"/>
        <dbReference type="ChEBI" id="CHEBI:57287"/>
        <dbReference type="ChEBI" id="CHEBI:57288"/>
        <dbReference type="ChEBI" id="CHEBI:78449"/>
        <dbReference type="ChEBI" id="CHEBI:78450"/>
        <dbReference type="EC" id="2.3.1.180"/>
    </reaction>
</comment>
<comment type="pathway">
    <text evidence="1">Lipid metabolism; fatty acid biosynthesis.</text>
</comment>
<comment type="subunit">
    <text evidence="1">Homodimer.</text>
</comment>
<comment type="subcellular location">
    <subcellularLocation>
        <location evidence="1">Cytoplasm</location>
    </subcellularLocation>
</comment>
<comment type="domain">
    <text evidence="1">The last Arg residue of the ACP-binding site is essential for the weak association between ACP/AcpP and FabH.</text>
</comment>
<comment type="similarity">
    <text evidence="1">Belongs to the thiolase-like superfamily. FabH family.</text>
</comment>
<organism>
    <name type="scientific">Cupriavidus pinatubonensis (strain JMP 134 / LMG 1197)</name>
    <name type="common">Cupriavidus necator (strain JMP 134)</name>
    <dbReference type="NCBI Taxonomy" id="264198"/>
    <lineage>
        <taxon>Bacteria</taxon>
        <taxon>Pseudomonadati</taxon>
        <taxon>Pseudomonadota</taxon>
        <taxon>Betaproteobacteria</taxon>
        <taxon>Burkholderiales</taxon>
        <taxon>Burkholderiaceae</taxon>
        <taxon>Cupriavidus</taxon>
    </lineage>
</organism>
<evidence type="ECO:0000255" key="1">
    <source>
        <dbReference type="HAMAP-Rule" id="MF_01815"/>
    </source>
</evidence>
<name>FABH_CUPPJ</name>
<proteinExistence type="inferred from homology"/>
<dbReference type="EC" id="2.3.1.180" evidence="1"/>
<dbReference type="EMBL" id="CP000090">
    <property type="protein sequence ID" value="AAZ61628.1"/>
    <property type="molecule type" value="Genomic_DNA"/>
</dbReference>
<dbReference type="SMR" id="Q46Z05"/>
<dbReference type="STRING" id="264198.Reut_A2265"/>
<dbReference type="KEGG" id="reu:Reut_A2265"/>
<dbReference type="eggNOG" id="COG0332">
    <property type="taxonomic scope" value="Bacteria"/>
</dbReference>
<dbReference type="HOGENOM" id="CLU_039592_3_1_4"/>
<dbReference type="OrthoDB" id="9815506at2"/>
<dbReference type="UniPathway" id="UPA00094"/>
<dbReference type="GO" id="GO:0005737">
    <property type="term" value="C:cytoplasm"/>
    <property type="evidence" value="ECO:0007669"/>
    <property type="project" value="UniProtKB-SubCell"/>
</dbReference>
<dbReference type="GO" id="GO:0004315">
    <property type="term" value="F:3-oxoacyl-[acyl-carrier-protein] synthase activity"/>
    <property type="evidence" value="ECO:0007669"/>
    <property type="project" value="InterPro"/>
</dbReference>
<dbReference type="GO" id="GO:0033818">
    <property type="term" value="F:beta-ketoacyl-acyl-carrier-protein synthase III activity"/>
    <property type="evidence" value="ECO:0007669"/>
    <property type="project" value="UniProtKB-UniRule"/>
</dbReference>
<dbReference type="GO" id="GO:0006633">
    <property type="term" value="P:fatty acid biosynthetic process"/>
    <property type="evidence" value="ECO:0007669"/>
    <property type="project" value="UniProtKB-UniRule"/>
</dbReference>
<dbReference type="GO" id="GO:0044550">
    <property type="term" value="P:secondary metabolite biosynthetic process"/>
    <property type="evidence" value="ECO:0007669"/>
    <property type="project" value="TreeGrafter"/>
</dbReference>
<dbReference type="CDD" id="cd00830">
    <property type="entry name" value="KAS_III"/>
    <property type="match status" value="1"/>
</dbReference>
<dbReference type="FunFam" id="3.40.47.10:FF:000004">
    <property type="entry name" value="3-oxoacyl-[acyl-carrier-protein] synthase 3"/>
    <property type="match status" value="1"/>
</dbReference>
<dbReference type="Gene3D" id="3.40.47.10">
    <property type="match status" value="2"/>
</dbReference>
<dbReference type="HAMAP" id="MF_01815">
    <property type="entry name" value="FabH"/>
    <property type="match status" value="1"/>
</dbReference>
<dbReference type="InterPro" id="IPR013747">
    <property type="entry name" value="ACP_syn_III_C"/>
</dbReference>
<dbReference type="InterPro" id="IPR013751">
    <property type="entry name" value="ACP_syn_III_N"/>
</dbReference>
<dbReference type="InterPro" id="IPR004655">
    <property type="entry name" value="FabH"/>
</dbReference>
<dbReference type="InterPro" id="IPR016039">
    <property type="entry name" value="Thiolase-like"/>
</dbReference>
<dbReference type="NCBIfam" id="TIGR00747">
    <property type="entry name" value="fabH"/>
    <property type="match status" value="1"/>
</dbReference>
<dbReference type="NCBIfam" id="NF006829">
    <property type="entry name" value="PRK09352.1"/>
    <property type="match status" value="1"/>
</dbReference>
<dbReference type="PANTHER" id="PTHR34069">
    <property type="entry name" value="3-OXOACYL-[ACYL-CARRIER-PROTEIN] SYNTHASE 3"/>
    <property type="match status" value="1"/>
</dbReference>
<dbReference type="PANTHER" id="PTHR34069:SF2">
    <property type="entry name" value="BETA-KETOACYL-[ACYL-CARRIER-PROTEIN] SYNTHASE III"/>
    <property type="match status" value="1"/>
</dbReference>
<dbReference type="Pfam" id="PF08545">
    <property type="entry name" value="ACP_syn_III"/>
    <property type="match status" value="1"/>
</dbReference>
<dbReference type="Pfam" id="PF08541">
    <property type="entry name" value="ACP_syn_III_C"/>
    <property type="match status" value="1"/>
</dbReference>
<dbReference type="SUPFAM" id="SSF53901">
    <property type="entry name" value="Thiolase-like"/>
    <property type="match status" value="1"/>
</dbReference>
<protein>
    <recommendedName>
        <fullName evidence="1">Beta-ketoacyl-[acyl-carrier-protein] synthase III</fullName>
        <shortName evidence="1">Beta-ketoacyl-ACP synthase III</shortName>
        <shortName evidence="1">KAS III</shortName>
        <ecNumber evidence="1">2.3.1.180</ecNumber>
    </recommendedName>
    <alternativeName>
        <fullName evidence="1">3-oxoacyl-[acyl-carrier-protein] synthase 3</fullName>
    </alternativeName>
    <alternativeName>
        <fullName evidence="1">3-oxoacyl-[acyl-carrier-protein] synthase III</fullName>
    </alternativeName>
</protein>
<accession>Q46Z05</accession>
<feature type="chain" id="PRO_1000070241" description="Beta-ketoacyl-[acyl-carrier-protein] synthase III">
    <location>
        <begin position="1"/>
        <end position="326"/>
    </location>
</feature>
<feature type="region of interest" description="ACP-binding" evidence="1">
    <location>
        <begin position="254"/>
        <end position="258"/>
    </location>
</feature>
<feature type="active site" evidence="1">
    <location>
        <position position="120"/>
    </location>
</feature>
<feature type="active site" evidence="1">
    <location>
        <position position="253"/>
    </location>
</feature>
<feature type="active site" evidence="1">
    <location>
        <position position="283"/>
    </location>
</feature>
<reference key="1">
    <citation type="journal article" date="2010" name="PLoS ONE">
        <title>The complete multipartite genome sequence of Cupriavidus necator JMP134, a versatile pollutant degrader.</title>
        <authorList>
            <person name="Lykidis A."/>
            <person name="Perez-Pantoja D."/>
            <person name="Ledger T."/>
            <person name="Mavromatis K."/>
            <person name="Anderson I.J."/>
            <person name="Ivanova N.N."/>
            <person name="Hooper S.D."/>
            <person name="Lapidus A."/>
            <person name="Lucas S."/>
            <person name="Gonzalez B."/>
            <person name="Kyrpides N.C."/>
        </authorList>
    </citation>
    <scope>NUCLEOTIDE SEQUENCE [LARGE SCALE GENOMIC DNA]</scope>
    <source>
        <strain>JMP134 / LMG 1197</strain>
    </source>
</reference>
<keyword id="KW-0012">Acyltransferase</keyword>
<keyword id="KW-0963">Cytoplasm</keyword>
<keyword id="KW-0275">Fatty acid biosynthesis</keyword>
<keyword id="KW-0276">Fatty acid metabolism</keyword>
<keyword id="KW-0444">Lipid biosynthesis</keyword>
<keyword id="KW-0443">Lipid metabolism</keyword>
<keyword id="KW-0511">Multifunctional enzyme</keyword>
<keyword id="KW-0808">Transferase</keyword>
<gene>
    <name evidence="1" type="primary">fabH</name>
    <name type="ordered locus">Reut_A2265</name>
</gene>